<organism>
    <name type="scientific">Methanococcus maripaludis (strain C5 / ATCC BAA-1333)</name>
    <dbReference type="NCBI Taxonomy" id="402880"/>
    <lineage>
        <taxon>Archaea</taxon>
        <taxon>Methanobacteriati</taxon>
        <taxon>Methanobacteriota</taxon>
        <taxon>Methanomada group</taxon>
        <taxon>Methanococci</taxon>
        <taxon>Methanococcales</taxon>
        <taxon>Methanococcaceae</taxon>
        <taxon>Methanococcus</taxon>
    </lineage>
</organism>
<keyword id="KW-0396">Initiation factor</keyword>
<keyword id="KW-0648">Protein biosynthesis</keyword>
<comment type="function">
    <text evidence="1">Binds to the 50S ribosomal subunit and prevents its association with the 30S ribosomal subunit to form the 70S initiation complex.</text>
</comment>
<comment type="similarity">
    <text evidence="1">Belongs to the eIF-6 family.</text>
</comment>
<evidence type="ECO:0000255" key="1">
    <source>
        <dbReference type="HAMAP-Rule" id="MF_00032"/>
    </source>
</evidence>
<dbReference type="EMBL" id="CP000609">
    <property type="protein sequence ID" value="ABO35913.1"/>
    <property type="molecule type" value="Genomic_DNA"/>
</dbReference>
<dbReference type="RefSeq" id="WP_011869360.1">
    <property type="nucleotide sequence ID" value="NC_009135.1"/>
</dbReference>
<dbReference type="SMR" id="A4G0C9"/>
<dbReference type="STRING" id="402880.MmarC5_1616"/>
<dbReference type="GeneID" id="4928159"/>
<dbReference type="KEGG" id="mmq:MmarC5_1616"/>
<dbReference type="eggNOG" id="arCOG04176">
    <property type="taxonomic scope" value="Archaea"/>
</dbReference>
<dbReference type="HOGENOM" id="CLU_071894_1_0_2"/>
<dbReference type="OrthoDB" id="33582at2157"/>
<dbReference type="Proteomes" id="UP000000253">
    <property type="component" value="Chromosome"/>
</dbReference>
<dbReference type="GO" id="GO:0043022">
    <property type="term" value="F:ribosome binding"/>
    <property type="evidence" value="ECO:0007669"/>
    <property type="project" value="InterPro"/>
</dbReference>
<dbReference type="GO" id="GO:0003743">
    <property type="term" value="F:translation initiation factor activity"/>
    <property type="evidence" value="ECO:0007669"/>
    <property type="project" value="UniProtKB-UniRule"/>
</dbReference>
<dbReference type="GO" id="GO:0042256">
    <property type="term" value="P:cytosolic ribosome assembly"/>
    <property type="evidence" value="ECO:0007669"/>
    <property type="project" value="InterPro"/>
</dbReference>
<dbReference type="Gene3D" id="3.75.10.10">
    <property type="entry name" value="L-arginine/glycine Amidinotransferase, Chain A"/>
    <property type="match status" value="1"/>
</dbReference>
<dbReference type="HAMAP" id="MF_00032">
    <property type="entry name" value="eIF_6"/>
    <property type="match status" value="1"/>
</dbReference>
<dbReference type="InterPro" id="IPR002769">
    <property type="entry name" value="eIF6"/>
</dbReference>
<dbReference type="NCBIfam" id="TIGR00323">
    <property type="entry name" value="eIF-6"/>
    <property type="match status" value="1"/>
</dbReference>
<dbReference type="NCBIfam" id="NF003127">
    <property type="entry name" value="PRK04046.1-3"/>
    <property type="match status" value="1"/>
</dbReference>
<dbReference type="PANTHER" id="PTHR10784">
    <property type="entry name" value="TRANSLATION INITIATION FACTOR 6"/>
    <property type="match status" value="1"/>
</dbReference>
<dbReference type="Pfam" id="PF01912">
    <property type="entry name" value="eIF-6"/>
    <property type="match status" value="1"/>
</dbReference>
<dbReference type="PIRSF" id="PIRSF006413">
    <property type="entry name" value="IF-6"/>
    <property type="match status" value="1"/>
</dbReference>
<dbReference type="SMART" id="SM00654">
    <property type="entry name" value="eIF6"/>
    <property type="match status" value="1"/>
</dbReference>
<dbReference type="SUPFAM" id="SSF55909">
    <property type="entry name" value="Pentein"/>
    <property type="match status" value="1"/>
</dbReference>
<feature type="chain" id="PRO_1000002599" description="Translation initiation factor 6">
    <location>
        <begin position="1"/>
        <end position="227"/>
    </location>
</feature>
<protein>
    <recommendedName>
        <fullName evidence="1">Translation initiation factor 6</fullName>
        <shortName evidence="1">aIF-6</shortName>
    </recommendedName>
</protein>
<sequence length="227" mass="24594">MIMKTYFSGVSTLGVHSLATEDYGFFPLSVDQKTMERMKNVLDIPATQLNISNSSLIGSLCVGNSNGLLVPDITTEKEVELIKMFLKENSLDVNLERLKAKNTAFGNLILTNNKGCIISEELSRFRKTIEDVLDVESGVGNYAELPTVGSNGVATDKGCLVHPLTDELELEWIQDILRVDYVERGTANRGVTSVGACILANIKGAVVGGDTSGPEILKIEEALDLID</sequence>
<reference key="1">
    <citation type="submission" date="2007-03" db="EMBL/GenBank/DDBJ databases">
        <title>Complete sequence of chromosome of Methanococcus maripaludis C5.</title>
        <authorList>
            <consortium name="US DOE Joint Genome Institute"/>
            <person name="Copeland A."/>
            <person name="Lucas S."/>
            <person name="Lapidus A."/>
            <person name="Barry K."/>
            <person name="Glavina del Rio T."/>
            <person name="Dalin E."/>
            <person name="Tice H."/>
            <person name="Pitluck S."/>
            <person name="Chertkov O."/>
            <person name="Brettin T."/>
            <person name="Bruce D."/>
            <person name="Han C."/>
            <person name="Detter J.C."/>
            <person name="Schmutz J."/>
            <person name="Larimer F."/>
            <person name="Land M."/>
            <person name="Hauser L."/>
            <person name="Kyrpides N."/>
            <person name="Mikhailova N."/>
            <person name="Sieprawska-Lupa M."/>
            <person name="Whitman W.B."/>
            <person name="Richardson P."/>
        </authorList>
    </citation>
    <scope>NUCLEOTIDE SEQUENCE [LARGE SCALE GENOMIC DNA]</scope>
    <source>
        <strain>C5 / ATCC BAA-1333</strain>
    </source>
</reference>
<accession>A4G0C9</accession>
<proteinExistence type="inferred from homology"/>
<name>IF6_METM5</name>
<gene>
    <name evidence="1" type="primary">eif6</name>
    <name type="ordered locus">MmarC5_1616</name>
</gene>